<proteinExistence type="evidence at protein level"/>
<organism>
    <name type="scientific">Vibrio splendidus (strain 12B01)</name>
    <dbReference type="NCBI Taxonomy" id="314291"/>
    <lineage>
        <taxon>Bacteria</taxon>
        <taxon>Pseudomonadati</taxon>
        <taxon>Pseudomonadota</taxon>
        <taxon>Gammaproteobacteria</taxon>
        <taxon>Vibrionales</taxon>
        <taxon>Vibrionaceae</taxon>
        <taxon>Vibrio</taxon>
    </lineage>
</organism>
<gene>
    <name type="ORF">V12B01_18061</name>
</gene>
<dbReference type="EC" id="2.4.2.31"/>
<dbReference type="EMBL" id="AAMR01000004">
    <property type="protein sequence ID" value="EAP95748.1"/>
    <property type="molecule type" value="Genomic_DNA"/>
</dbReference>
<dbReference type="RefSeq" id="WP_004732479.1">
    <property type="nucleotide sequence ID" value="NZ_CH724170.1"/>
</dbReference>
<dbReference type="PDB" id="4XZJ">
    <property type="method" value="X-ray"/>
    <property type="resolution" value="1.80 A"/>
    <property type="chains" value="A=20-240"/>
</dbReference>
<dbReference type="PDB" id="4XZK">
    <property type="method" value="X-ray"/>
    <property type="resolution" value="1.80 A"/>
    <property type="chains" value="A=20-240"/>
</dbReference>
<dbReference type="PDB" id="4Y1W">
    <property type="method" value="X-ray"/>
    <property type="resolution" value="1.40 A"/>
    <property type="chains" value="A=20-240"/>
</dbReference>
<dbReference type="PDB" id="4YC0">
    <property type="method" value="X-ray"/>
    <property type="resolution" value="1.50 A"/>
    <property type="chains" value="A=20-240"/>
</dbReference>
<dbReference type="PDBsum" id="4XZJ"/>
<dbReference type="PDBsum" id="4XZK"/>
<dbReference type="PDBsum" id="4Y1W"/>
<dbReference type="PDBsum" id="4YC0"/>
<dbReference type="SMR" id="A3UNN4"/>
<dbReference type="HOGENOM" id="CLU_1115401_0_0_6"/>
<dbReference type="EvolutionaryTrace" id="A3UNN4"/>
<dbReference type="GO" id="GO:0005576">
    <property type="term" value="C:extracellular region"/>
    <property type="evidence" value="ECO:0007669"/>
    <property type="project" value="UniProtKB-SubCell"/>
</dbReference>
<dbReference type="GO" id="GO:0106274">
    <property type="term" value="F:NAD+-protein-arginine ADP-ribosyltransferase activity"/>
    <property type="evidence" value="ECO:0007669"/>
    <property type="project" value="UniProtKB-EC"/>
</dbReference>
<dbReference type="GO" id="GO:0000166">
    <property type="term" value="F:nucleotide binding"/>
    <property type="evidence" value="ECO:0007669"/>
    <property type="project" value="UniProtKB-KW"/>
</dbReference>
<dbReference type="GO" id="GO:0016779">
    <property type="term" value="F:nucleotidyltransferase activity"/>
    <property type="evidence" value="ECO:0007669"/>
    <property type="project" value="UniProtKB-KW"/>
</dbReference>
<dbReference type="GO" id="GO:0090729">
    <property type="term" value="F:toxin activity"/>
    <property type="evidence" value="ECO:0007669"/>
    <property type="project" value="UniProtKB-KW"/>
</dbReference>
<dbReference type="Gene3D" id="3.90.176.10">
    <property type="entry name" value="Toxin ADP-ribosyltransferase, Chain A, domain 1"/>
    <property type="match status" value="1"/>
</dbReference>
<dbReference type="InterPro" id="IPR003540">
    <property type="entry name" value="ADP-ribosyltransferase"/>
</dbReference>
<dbReference type="Pfam" id="PF03496">
    <property type="entry name" value="ADPrib_exo_Tox"/>
    <property type="match status" value="1"/>
</dbReference>
<dbReference type="SUPFAM" id="SSF56399">
    <property type="entry name" value="ADP-ribosylation"/>
    <property type="match status" value="1"/>
</dbReference>
<dbReference type="PROSITE" id="PS51996">
    <property type="entry name" value="TR_MART"/>
    <property type="match status" value="1"/>
</dbReference>
<sequence length="249" mass="28087">MNTRFLLLLCCLSFTTFSQPFDAIKQPNRSEEEVTQLAEDFKDWSKASNGWRYSFITANEKEAVEDFSISGYQTANDYLRATDTSTWGVAGADARQYIRTVKSALNKLPKYKGTAYRGTWVKLSLLNKLEEGDVLVEPAFTSTSTLPEVAKRFSVVHPNSPQRLKRVLFEVKINQGGHTIAGLSEYSKEAEVLFAPNAHFRITQIERTSNHTYIGVETVKASAVKNTQKYNLYSGEEVEASFWHSLVCT</sequence>
<accession>A3UNN4</accession>
<keyword id="KW-0002">3D-structure</keyword>
<keyword id="KW-0328">Glycosyltransferase</keyword>
<keyword id="KW-0520">NAD</keyword>
<keyword id="KW-0521">NADP</keyword>
<keyword id="KW-0547">Nucleotide-binding</keyword>
<keyword id="KW-0548">Nucleotidyltransferase</keyword>
<keyword id="KW-0964">Secreted</keyword>
<keyword id="KW-0732">Signal</keyword>
<keyword id="KW-0800">Toxin</keyword>
<keyword id="KW-0808">Transferase</keyword>
<keyword id="KW-0843">Virulence</keyword>
<name>VIS_VIBS1</name>
<reference key="1">
    <citation type="submission" date="2006-01" db="EMBL/GenBank/DDBJ databases">
        <authorList>
            <person name="Polz M."/>
            <person name="Ferriera S."/>
            <person name="Johnson J."/>
            <person name="Kravitz S."/>
            <person name="Halpern A."/>
            <person name="Remington K."/>
            <person name="Beeson K."/>
            <person name="Tran B."/>
            <person name="Rogers Y.-H."/>
            <person name="Friedman R."/>
            <person name="Venter J.C."/>
        </authorList>
    </citation>
    <scope>NUCLEOTIDE SEQUENCE [LARGE SCALE GENOMIC DNA]</scope>
    <source>
        <strain>12B01</strain>
    </source>
</reference>
<reference key="2">
    <citation type="journal article" date="2010" name="PLoS Comput. Biol.">
        <title>Cholera- and anthrax-like toxins are among several new ADP-ribosyltransferases.</title>
        <authorList>
            <person name="Fieldhouse R.J."/>
            <person name="Turgeon Z."/>
            <person name="White D."/>
            <person name="Merrill A.R."/>
        </authorList>
    </citation>
    <scope>FUNCTION AS A TOXIN</scope>
    <scope>EXPRESSION IN YEAST</scope>
    <scope>SUBCELLULAR LOCATION</scope>
    <scope>MUTAGENESIS OF GLU-189 AND GLU-191</scope>
    <source>
        <strain>12B01</strain>
    </source>
</reference>
<protein>
    <recommendedName>
        <fullName>Putative NAD(+)--arginine ADP-ribosyltransferase Vis</fullName>
        <ecNumber>2.4.2.31</ecNumber>
    </recommendedName>
    <alternativeName>
        <fullName>Putative mono(ADP-ribosyl)transferase</fullName>
        <shortName>mADPRT</shortName>
        <shortName>mART</shortName>
    </alternativeName>
    <alternativeName>
        <fullName>Toxin Vis</fullName>
    </alternativeName>
</protein>
<feature type="signal peptide" evidence="1">
    <location>
        <begin position="1"/>
        <end position="18"/>
    </location>
</feature>
<feature type="chain" id="PRO_0000410947" description="Putative NAD(+)--arginine ADP-ribosyltransferase Vis">
    <location>
        <begin position="19"/>
        <end position="249"/>
    </location>
</feature>
<feature type="domain" description="TR mART core" evidence="2">
    <location>
        <begin position="31"/>
        <end position="223"/>
    </location>
</feature>
<feature type="active site" evidence="2">
    <location>
        <position position="117"/>
    </location>
</feature>
<feature type="active site" evidence="2">
    <location>
        <position position="142"/>
    </location>
</feature>
<feature type="active site" evidence="2">
    <location>
        <position position="191"/>
    </location>
</feature>
<feature type="binding site" evidence="1">
    <location>
        <begin position="68"/>
        <end position="80"/>
    </location>
    <ligand>
        <name>NAD(+)</name>
        <dbReference type="ChEBI" id="CHEBI:57540"/>
    </ligand>
</feature>
<feature type="binding site" evidence="1">
    <location>
        <begin position="117"/>
        <end position="120"/>
    </location>
    <ligand>
        <name>NAD(+)</name>
        <dbReference type="ChEBI" id="CHEBI:57540"/>
    </ligand>
</feature>
<feature type="binding site" evidence="1">
    <location>
        <position position="137"/>
    </location>
    <ligand>
        <name>NAD(+)</name>
        <dbReference type="ChEBI" id="CHEBI:57540"/>
    </ligand>
</feature>
<feature type="binding site" evidence="1">
    <location>
        <position position="191"/>
    </location>
    <ligand>
        <name>NAD(+)</name>
        <dbReference type="ChEBI" id="CHEBI:57540"/>
    </ligand>
</feature>
<feature type="mutagenesis site" description="Restores 60% growth in yeast.">
    <original>EAE</original>
    <variation>AAA</variation>
    <location>
        <begin position="189"/>
        <end position="191"/>
    </location>
</feature>
<feature type="mutagenesis site" description="Restores 20% growth in yeast." evidence="3">
    <original>E</original>
    <variation>A</variation>
    <location>
        <position position="189"/>
    </location>
</feature>
<feature type="mutagenesis site" description="Restores 40% growth in yeast." evidence="3">
    <original>E</original>
    <variation>A</variation>
    <location>
        <position position="191"/>
    </location>
</feature>
<feature type="helix" evidence="5">
    <location>
        <begin position="22"/>
        <end position="25"/>
    </location>
</feature>
<feature type="helix" evidence="5">
    <location>
        <begin position="31"/>
        <end position="47"/>
    </location>
</feature>
<feature type="helix" evidence="5">
    <location>
        <begin position="51"/>
        <end position="55"/>
    </location>
</feature>
<feature type="helix" evidence="5">
    <location>
        <begin position="58"/>
        <end position="67"/>
    </location>
</feature>
<feature type="turn" evidence="5">
    <location>
        <begin position="68"/>
        <end position="70"/>
    </location>
</feature>
<feature type="helix" evidence="5">
    <location>
        <begin position="71"/>
        <end position="80"/>
    </location>
</feature>
<feature type="helix" evidence="6">
    <location>
        <begin position="84"/>
        <end position="88"/>
    </location>
</feature>
<feature type="helix" evidence="5">
    <location>
        <begin position="89"/>
        <end position="105"/>
    </location>
</feature>
<feature type="strand" evidence="5">
    <location>
        <begin position="113"/>
        <end position="122"/>
    </location>
</feature>
<feature type="helix" evidence="5">
    <location>
        <begin position="123"/>
        <end position="126"/>
    </location>
</feature>
<feature type="strand" evidence="5">
    <location>
        <begin position="134"/>
        <end position="139"/>
    </location>
</feature>
<feature type="strand" evidence="5">
    <location>
        <begin position="141"/>
        <end position="145"/>
    </location>
</feature>
<feature type="helix" evidence="5">
    <location>
        <begin position="147"/>
        <end position="152"/>
    </location>
</feature>
<feature type="strand" evidence="5">
    <location>
        <begin position="164"/>
        <end position="176"/>
    </location>
</feature>
<feature type="turn" evidence="5">
    <location>
        <begin position="181"/>
        <end position="183"/>
    </location>
</feature>
<feature type="strand" evidence="5">
    <location>
        <begin position="191"/>
        <end position="194"/>
    </location>
</feature>
<feature type="strand" evidence="5">
    <location>
        <begin position="198"/>
        <end position="207"/>
    </location>
</feature>
<feature type="strand" evidence="5">
    <location>
        <begin position="212"/>
        <end position="219"/>
    </location>
</feature>
<feature type="helix" evidence="5">
    <location>
        <begin position="221"/>
        <end position="223"/>
    </location>
</feature>
<feature type="strand" evidence="5">
    <location>
        <begin position="229"/>
        <end position="231"/>
    </location>
</feature>
<feature type="turn" evidence="5">
    <location>
        <begin position="232"/>
        <end position="234"/>
    </location>
</feature>
<comment type="function">
    <text evidence="3">A probable mono(ADP-ribosyl)transferase, it may ADP-ribosylate Arg in target protein(s). Upon expression in yeast cells causes cell death.</text>
</comment>
<comment type="catalytic activity">
    <reaction>
        <text>L-arginyl-[protein] + NAD(+) = N(omega)-(ADP-D-ribosyl)-L-arginyl-[protein] + nicotinamide + H(+)</text>
        <dbReference type="Rhea" id="RHEA:19149"/>
        <dbReference type="Rhea" id="RHEA-COMP:10532"/>
        <dbReference type="Rhea" id="RHEA-COMP:15087"/>
        <dbReference type="ChEBI" id="CHEBI:15378"/>
        <dbReference type="ChEBI" id="CHEBI:17154"/>
        <dbReference type="ChEBI" id="CHEBI:29965"/>
        <dbReference type="ChEBI" id="CHEBI:57540"/>
        <dbReference type="ChEBI" id="CHEBI:142554"/>
        <dbReference type="EC" id="2.4.2.31"/>
    </reaction>
</comment>
<comment type="subcellular location">
    <subcellularLocation>
        <location evidence="4">Secreted</location>
    </subcellularLocation>
</comment>
<comment type="similarity">
    <text evidence="4">Belongs to the Arg-specific ADP-ribosyltransferase family.</text>
</comment>
<evidence type="ECO:0000255" key="1"/>
<evidence type="ECO:0000255" key="2">
    <source>
        <dbReference type="PROSITE-ProRule" id="PRU01340"/>
    </source>
</evidence>
<evidence type="ECO:0000269" key="3">
    <source>
    </source>
</evidence>
<evidence type="ECO:0000305" key="4"/>
<evidence type="ECO:0007829" key="5">
    <source>
        <dbReference type="PDB" id="4Y1W"/>
    </source>
</evidence>
<evidence type="ECO:0007829" key="6">
    <source>
        <dbReference type="PDB" id="4YC0"/>
    </source>
</evidence>